<gene>
    <name evidence="1" type="primary">rpo11</name>
    <name evidence="1 5" type="synonym">rpoL</name>
    <name type="ordered locus">Saci_0173</name>
</gene>
<comment type="function">
    <text evidence="1 4">DNA-dependent RNA polymerase (RNAP) catalyzes the transcription of DNA into RNA using the four ribonucleoside triphosphates as substrates.</text>
</comment>
<comment type="catalytic activity">
    <reaction evidence="1 4">
        <text>RNA(n) + a ribonucleoside 5'-triphosphate = RNA(n+1) + diphosphate</text>
        <dbReference type="Rhea" id="RHEA:21248"/>
        <dbReference type="Rhea" id="RHEA-COMP:14527"/>
        <dbReference type="Rhea" id="RHEA-COMP:17342"/>
        <dbReference type="ChEBI" id="CHEBI:33019"/>
        <dbReference type="ChEBI" id="CHEBI:61557"/>
        <dbReference type="ChEBI" id="CHEBI:140395"/>
        <dbReference type="EC" id="2.7.7.6"/>
    </reaction>
</comment>
<comment type="subunit">
    <text evidence="2 3 4 6 7 8">Part of the 13-subunit RNA polymerase complex.</text>
</comment>
<comment type="subcellular location">
    <subcellularLocation>
        <location evidence="1">Cytoplasm</location>
    </subcellularLocation>
</comment>
<comment type="similarity">
    <text evidence="1">Belongs to the archaeal Rpo11/eukaryotic RPB11/RPC19 RNA polymerase subunit family.</text>
</comment>
<keyword id="KW-0002">3D-structure</keyword>
<keyword id="KW-0963">Cytoplasm</keyword>
<keyword id="KW-0240">DNA-directed RNA polymerase</keyword>
<keyword id="KW-0548">Nucleotidyltransferase</keyword>
<keyword id="KW-1185">Reference proteome</keyword>
<keyword id="KW-0804">Transcription</keyword>
<keyword id="KW-0808">Transferase</keyword>
<evidence type="ECO:0000255" key="1">
    <source>
        <dbReference type="HAMAP-Rule" id="MF_00261"/>
    </source>
</evidence>
<evidence type="ECO:0000269" key="2">
    <source>
    </source>
</evidence>
<evidence type="ECO:0000269" key="3">
    <source>
    </source>
</evidence>
<evidence type="ECO:0000269" key="4">
    <source ref="4"/>
</evidence>
<evidence type="ECO:0000303" key="5">
    <source>
    </source>
</evidence>
<evidence type="ECO:0000312" key="6">
    <source>
        <dbReference type="PDB" id="7OK0"/>
    </source>
</evidence>
<evidence type="ECO:0000312" key="7">
    <source>
        <dbReference type="PDB" id="7OQ4"/>
    </source>
</evidence>
<evidence type="ECO:0000312" key="8">
    <source>
        <dbReference type="PDB" id="7OQY"/>
    </source>
</evidence>
<evidence type="ECO:0007829" key="9">
    <source>
        <dbReference type="PDB" id="7OQY"/>
    </source>
</evidence>
<dbReference type="EC" id="2.7.7.6" evidence="1 4"/>
<dbReference type="EMBL" id="X70805">
    <property type="protein sequence ID" value="CAA50072.1"/>
    <property type="molecule type" value="Genomic_DNA"/>
</dbReference>
<dbReference type="EMBL" id="CP000077">
    <property type="protein sequence ID" value="AAY79592.1"/>
    <property type="molecule type" value="Genomic_DNA"/>
</dbReference>
<dbReference type="PIR" id="S78047">
    <property type="entry name" value="S78047"/>
</dbReference>
<dbReference type="RefSeq" id="WP_011277093.1">
    <property type="nucleotide sequence ID" value="NC_007181.1"/>
</dbReference>
<dbReference type="PDB" id="7OK0">
    <property type="method" value="EM"/>
    <property type="resolution" value="2.90 A"/>
    <property type="chains" value="L=1-90"/>
</dbReference>
<dbReference type="PDB" id="7OQ4">
    <property type="method" value="EM"/>
    <property type="resolution" value="3.27 A"/>
    <property type="chains" value="L=1-90"/>
</dbReference>
<dbReference type="PDB" id="7OQY">
    <property type="method" value="EM"/>
    <property type="resolution" value="2.61 A"/>
    <property type="chains" value="L=1-90"/>
</dbReference>
<dbReference type="PDBsum" id="7OK0"/>
<dbReference type="PDBsum" id="7OQ4"/>
<dbReference type="PDBsum" id="7OQY"/>
<dbReference type="EMDB" id="EMD-12960"/>
<dbReference type="EMDB" id="EMD-13026"/>
<dbReference type="EMDB" id="EMD-13034"/>
<dbReference type="SMR" id="P46217"/>
<dbReference type="STRING" id="330779.Saci_0173"/>
<dbReference type="GeneID" id="14550700"/>
<dbReference type="KEGG" id="sai:Saci_0173"/>
<dbReference type="PATRIC" id="fig|330779.12.peg.164"/>
<dbReference type="eggNOG" id="arCOG04111">
    <property type="taxonomic scope" value="Archaea"/>
</dbReference>
<dbReference type="HOGENOM" id="CLU_090381_4_2_2"/>
<dbReference type="BRENDA" id="2.7.7.6">
    <property type="organism ID" value="6160"/>
</dbReference>
<dbReference type="Proteomes" id="UP000001018">
    <property type="component" value="Chromosome"/>
</dbReference>
<dbReference type="GO" id="GO:0005737">
    <property type="term" value="C:cytoplasm"/>
    <property type="evidence" value="ECO:0007669"/>
    <property type="project" value="UniProtKB-SubCell"/>
</dbReference>
<dbReference type="GO" id="GO:0000428">
    <property type="term" value="C:DNA-directed RNA polymerase complex"/>
    <property type="evidence" value="ECO:0000314"/>
    <property type="project" value="UniProtKB"/>
</dbReference>
<dbReference type="GO" id="GO:0003677">
    <property type="term" value="F:DNA binding"/>
    <property type="evidence" value="ECO:0007669"/>
    <property type="project" value="InterPro"/>
</dbReference>
<dbReference type="GO" id="GO:0003899">
    <property type="term" value="F:DNA-directed RNA polymerase activity"/>
    <property type="evidence" value="ECO:0000314"/>
    <property type="project" value="UniProtKB"/>
</dbReference>
<dbReference type="GO" id="GO:0046983">
    <property type="term" value="F:protein dimerization activity"/>
    <property type="evidence" value="ECO:0007669"/>
    <property type="project" value="InterPro"/>
</dbReference>
<dbReference type="GO" id="GO:0006351">
    <property type="term" value="P:DNA-templated transcription"/>
    <property type="evidence" value="ECO:0000314"/>
    <property type="project" value="UniProtKB"/>
</dbReference>
<dbReference type="CDD" id="cd06927">
    <property type="entry name" value="RNAP_L"/>
    <property type="match status" value="1"/>
</dbReference>
<dbReference type="Gene3D" id="3.30.1360.10">
    <property type="entry name" value="RNA polymerase, RBP11-like subunit"/>
    <property type="match status" value="1"/>
</dbReference>
<dbReference type="HAMAP" id="MF_00261">
    <property type="entry name" value="RNApol_arch_Rpo11"/>
    <property type="match status" value="1"/>
</dbReference>
<dbReference type="InterPro" id="IPR036603">
    <property type="entry name" value="RBP11-like"/>
</dbReference>
<dbReference type="InterPro" id="IPR009025">
    <property type="entry name" value="RBP11-like_dimer"/>
</dbReference>
<dbReference type="InterPro" id="IPR008193">
    <property type="entry name" value="RNA_pol_Rpb11_13-16kDa_CS"/>
</dbReference>
<dbReference type="InterPro" id="IPR022905">
    <property type="entry name" value="Rpo11-like"/>
</dbReference>
<dbReference type="NCBIfam" id="NF002233">
    <property type="entry name" value="PRK01146.1-1"/>
    <property type="match status" value="1"/>
</dbReference>
<dbReference type="PANTHER" id="PTHR13946">
    <property type="entry name" value="DNA-DIRECTED RNA POLYMERASE I,II,III"/>
    <property type="match status" value="1"/>
</dbReference>
<dbReference type="PANTHER" id="PTHR13946:SF28">
    <property type="entry name" value="DNA-DIRECTED RNA POLYMERASES I AND III SUBUNIT RPAC2"/>
    <property type="match status" value="1"/>
</dbReference>
<dbReference type="Pfam" id="PF13656">
    <property type="entry name" value="RNA_pol_L_2"/>
    <property type="match status" value="1"/>
</dbReference>
<dbReference type="SUPFAM" id="SSF55257">
    <property type="entry name" value="RBP11-like subunits of RNA polymerase"/>
    <property type="match status" value="1"/>
</dbReference>
<dbReference type="PROSITE" id="PS01154">
    <property type="entry name" value="RNA_POL_L_13KD"/>
    <property type="match status" value="1"/>
</dbReference>
<sequence>MEIKVIKEEQNYLELQIDGEEHTIGNLLKGMLLKVPGVKFAAYSLPHPLITSITIKILTDGSISAREALIKAIELAENYANLFIDEVKKI</sequence>
<feature type="chain" id="PRO_0000149338" description="DNA-directed RNA polymerase subunit Rpo11">
    <location>
        <begin position="1"/>
        <end position="90"/>
    </location>
</feature>
<feature type="strand" evidence="9">
    <location>
        <begin position="2"/>
        <end position="8"/>
    </location>
</feature>
<feature type="strand" evidence="9">
    <location>
        <begin position="10"/>
        <end position="18"/>
    </location>
</feature>
<feature type="helix" evidence="9">
    <location>
        <begin position="22"/>
        <end position="32"/>
    </location>
</feature>
<feature type="strand" evidence="9">
    <location>
        <begin position="38"/>
        <end position="44"/>
    </location>
</feature>
<feature type="strand" evidence="9">
    <location>
        <begin position="52"/>
        <end position="59"/>
    </location>
</feature>
<feature type="strand" evidence="9">
    <location>
        <begin position="61"/>
        <end position="63"/>
    </location>
</feature>
<feature type="helix" evidence="9">
    <location>
        <begin position="65"/>
        <end position="87"/>
    </location>
</feature>
<organism>
    <name type="scientific">Sulfolobus acidocaldarius (strain ATCC 33909 / DSM 639 / JCM 8929 / NBRC 15157 / NCIMB 11770)</name>
    <dbReference type="NCBI Taxonomy" id="330779"/>
    <lineage>
        <taxon>Archaea</taxon>
        <taxon>Thermoproteota</taxon>
        <taxon>Thermoprotei</taxon>
        <taxon>Sulfolobales</taxon>
        <taxon>Sulfolobaceae</taxon>
        <taxon>Sulfolobus</taxon>
    </lineage>
</organism>
<name>RPO11_SULAC</name>
<accession>P46217</accession>
<accession>Q4JC87</accession>
<protein>
    <recommendedName>
        <fullName evidence="1">DNA-directed RNA polymerase subunit Rpo11</fullName>
        <ecNumber evidence="1 4">2.7.7.6</ecNumber>
    </recommendedName>
    <alternativeName>
        <fullName evidence="1 5">DNA-directed RNA polymerase subunit L</fullName>
    </alternativeName>
</protein>
<proteinExistence type="evidence at protein level"/>
<reference key="1">
    <citation type="journal article" date="1993" name="Nucleic Acids Res.">
        <title>Putative tfIIs gene of Sulfolobus acidocaldarius encoding an archaeal transcription elongation factor is situated directly downstream of the gene for a small subunit of DNA-dependent RNA polymerase.</title>
        <authorList>
            <person name="Langer D."/>
            <person name="Zillig W."/>
        </authorList>
    </citation>
    <scope>NUCLEOTIDE SEQUENCE [GENOMIC DNA]</scope>
    <source>
        <strain>ATCC 33909 / DSM 639 / JCM 8929 / NBRC 15157 / NCIMB 11770</strain>
    </source>
</reference>
<reference key="2">
    <citation type="journal article" date="2005" name="J. Bacteriol.">
        <title>The genome of Sulfolobus acidocaldarius, a model organism of the Crenarchaeota.</title>
        <authorList>
            <person name="Chen L."/>
            <person name="Bruegger K."/>
            <person name="Skovgaard M."/>
            <person name="Redder P."/>
            <person name="She Q."/>
            <person name="Torarinsson E."/>
            <person name="Greve B."/>
            <person name="Awayez M."/>
            <person name="Zibat A."/>
            <person name="Klenk H.-P."/>
            <person name="Garrett R.A."/>
        </authorList>
    </citation>
    <scope>NUCLEOTIDE SEQUENCE [LARGE SCALE GENOMIC DNA]</scope>
    <source>
        <strain>ATCC 33909 / DSM 639 / JCM 8929 / NBRC 15157 / NCIMB 11770</strain>
    </source>
</reference>
<reference key="3">
    <citation type="journal article" date="1992" name="Proc. Natl. Acad. Sci. U.S.A.">
        <title>Component H of the DNA-dependent RNA polymerases of Archaea is homologous to a subunit shared by the three eucaryal nuclear RNA polymerases.</title>
        <authorList>
            <person name="Klenk H.-P."/>
            <person name="Palm P."/>
            <person name="Lottspeich F."/>
            <person name="Zillig W."/>
        </authorList>
    </citation>
    <scope>SUBUNIT</scope>
    <source>
        <strain>ATCC 33909 / DSM 639 / JCM 8929 / NBRC 15157 / NCIMB 11770</strain>
    </source>
</reference>
<reference key="4">
    <citation type="journal article" date="1994" name="Syst. Appl. Microbiol.">
        <title>Structure and Function of the DNA-Dependent RNA Polymerase of Sulfolobus.</title>
        <authorList>
            <person name="Lanzendorfer M."/>
            <person name="Langer D."/>
            <person name="Hain J."/>
            <person name="Klenk H.-P."/>
            <person name="Holz I."/>
            <person name="Arnold-Ammer I."/>
            <person name="Zillig W."/>
        </authorList>
    </citation>
    <scope>FUNCTION</scope>
    <scope>CATALYTIC ACTIVITY</scope>
    <scope>SUBUNIT</scope>
    <source>
        <strain>ATCC 33909 / DSM 639 / JCM 8929 / NBRC 15157 / NCIMB 11770</strain>
    </source>
</reference>
<reference evidence="6 7 8" key="5">
    <citation type="journal article" date="2021" name="Nat. Commun.">
        <title>Structural basis of RNA polymerase inhibition by viral and host factors.</title>
        <authorList>
            <person name="Pilotto S."/>
            <person name="Fouqueau T."/>
            <person name="Lukoyanova N."/>
            <person name="Sheppard C."/>
            <person name="Lucas-Staat S."/>
            <person name="Diaz-Santin L.M."/>
            <person name="Matelska D."/>
            <person name="Prangishvili D."/>
            <person name="Cheung A.C.M."/>
            <person name="Werner F."/>
        </authorList>
    </citation>
    <scope>STRUCTURE BY ELECTRON MICROSCOPY (2.61 ANGSTROMS) OF RNAP WITH AND WITHOUT INHIBITORS</scope>
    <scope>SUBUNIT</scope>
    <source>
        <strain>ATCC 33909 / DSM 639 / JCM 8929 / NBRC 15157 / NCIMB 11770</strain>
    </source>
</reference>